<gene>
    <name evidence="1" type="primary">truA</name>
    <name type="ordered locus">CbuK_0757</name>
</gene>
<comment type="function">
    <text evidence="1">Formation of pseudouridine at positions 38, 39 and 40 in the anticodon stem and loop of transfer RNAs.</text>
</comment>
<comment type="catalytic activity">
    <reaction evidence="1">
        <text>uridine(38/39/40) in tRNA = pseudouridine(38/39/40) in tRNA</text>
        <dbReference type="Rhea" id="RHEA:22376"/>
        <dbReference type="Rhea" id="RHEA-COMP:10085"/>
        <dbReference type="Rhea" id="RHEA-COMP:10087"/>
        <dbReference type="ChEBI" id="CHEBI:65314"/>
        <dbReference type="ChEBI" id="CHEBI:65315"/>
        <dbReference type="EC" id="5.4.99.12"/>
    </reaction>
</comment>
<comment type="subunit">
    <text evidence="1">Homodimer.</text>
</comment>
<comment type="similarity">
    <text evidence="1">Belongs to the tRNA pseudouridine synthase TruA family.</text>
</comment>
<evidence type="ECO:0000255" key="1">
    <source>
        <dbReference type="HAMAP-Rule" id="MF_00171"/>
    </source>
</evidence>
<feature type="chain" id="PRO_1000194542" description="tRNA pseudouridine synthase A">
    <location>
        <begin position="1"/>
        <end position="261"/>
    </location>
</feature>
<feature type="active site" description="Nucleophile" evidence="1">
    <location>
        <position position="52"/>
    </location>
</feature>
<feature type="binding site" evidence="1">
    <location>
        <position position="110"/>
    </location>
    <ligand>
        <name>substrate</name>
    </ligand>
</feature>
<reference key="1">
    <citation type="journal article" date="2009" name="Infect. Immun.">
        <title>Comparative genomics reveal extensive transposon-mediated genomic plasticity and diversity among potential effector proteins within the genus Coxiella.</title>
        <authorList>
            <person name="Beare P.A."/>
            <person name="Unsworth N."/>
            <person name="Andoh M."/>
            <person name="Voth D.E."/>
            <person name="Omsland A."/>
            <person name="Gilk S.D."/>
            <person name="Williams K.P."/>
            <person name="Sobral B.W."/>
            <person name="Kupko J.J. III"/>
            <person name="Porcella S.F."/>
            <person name="Samuel J.E."/>
            <person name="Heinzen R.A."/>
        </authorList>
    </citation>
    <scope>NUCLEOTIDE SEQUENCE [LARGE SCALE GENOMIC DNA]</scope>
    <source>
        <strain>CbuK_Q154</strain>
    </source>
</reference>
<keyword id="KW-0413">Isomerase</keyword>
<keyword id="KW-0819">tRNA processing</keyword>
<organism>
    <name type="scientific">Coxiella burnetii (strain CbuK_Q154)</name>
    <name type="common">Coxiella burnetii (strain Q154)</name>
    <dbReference type="NCBI Taxonomy" id="434924"/>
    <lineage>
        <taxon>Bacteria</taxon>
        <taxon>Pseudomonadati</taxon>
        <taxon>Pseudomonadota</taxon>
        <taxon>Gammaproteobacteria</taxon>
        <taxon>Legionellales</taxon>
        <taxon>Coxiellaceae</taxon>
        <taxon>Coxiella</taxon>
    </lineage>
</organism>
<dbReference type="EC" id="5.4.99.12" evidence="1"/>
<dbReference type="EMBL" id="CP001020">
    <property type="protein sequence ID" value="ACJ20012.1"/>
    <property type="molecule type" value="Genomic_DNA"/>
</dbReference>
<dbReference type="RefSeq" id="WP_005768766.1">
    <property type="nucleotide sequence ID" value="NC_011528.1"/>
</dbReference>
<dbReference type="SMR" id="B6J6W3"/>
<dbReference type="KEGG" id="cbc:CbuK_0757"/>
<dbReference type="HOGENOM" id="CLU_014673_0_2_6"/>
<dbReference type="GO" id="GO:0003723">
    <property type="term" value="F:RNA binding"/>
    <property type="evidence" value="ECO:0007669"/>
    <property type="project" value="InterPro"/>
</dbReference>
<dbReference type="GO" id="GO:0160147">
    <property type="term" value="F:tRNA pseudouridine(38-40) synthase activity"/>
    <property type="evidence" value="ECO:0007669"/>
    <property type="project" value="UniProtKB-EC"/>
</dbReference>
<dbReference type="GO" id="GO:0031119">
    <property type="term" value="P:tRNA pseudouridine synthesis"/>
    <property type="evidence" value="ECO:0007669"/>
    <property type="project" value="UniProtKB-UniRule"/>
</dbReference>
<dbReference type="CDD" id="cd02570">
    <property type="entry name" value="PseudoU_synth_EcTruA"/>
    <property type="match status" value="1"/>
</dbReference>
<dbReference type="FunFam" id="3.30.70.580:FF:000001">
    <property type="entry name" value="tRNA pseudouridine synthase A"/>
    <property type="match status" value="1"/>
</dbReference>
<dbReference type="Gene3D" id="3.30.70.660">
    <property type="entry name" value="Pseudouridine synthase I, catalytic domain, C-terminal subdomain"/>
    <property type="match status" value="1"/>
</dbReference>
<dbReference type="Gene3D" id="3.30.70.580">
    <property type="entry name" value="Pseudouridine synthase I, catalytic domain, N-terminal subdomain"/>
    <property type="match status" value="1"/>
</dbReference>
<dbReference type="HAMAP" id="MF_00171">
    <property type="entry name" value="TruA"/>
    <property type="match status" value="1"/>
</dbReference>
<dbReference type="InterPro" id="IPR020103">
    <property type="entry name" value="PsdUridine_synth_cat_dom_sf"/>
</dbReference>
<dbReference type="InterPro" id="IPR001406">
    <property type="entry name" value="PsdUridine_synth_TruA"/>
</dbReference>
<dbReference type="InterPro" id="IPR020097">
    <property type="entry name" value="PsdUridine_synth_TruA_a/b_dom"/>
</dbReference>
<dbReference type="InterPro" id="IPR020095">
    <property type="entry name" value="PsdUridine_synth_TruA_C"/>
</dbReference>
<dbReference type="InterPro" id="IPR020094">
    <property type="entry name" value="TruA/RsuA/RluB/E/F_N"/>
</dbReference>
<dbReference type="NCBIfam" id="TIGR00071">
    <property type="entry name" value="hisT_truA"/>
    <property type="match status" value="1"/>
</dbReference>
<dbReference type="PANTHER" id="PTHR11142">
    <property type="entry name" value="PSEUDOURIDYLATE SYNTHASE"/>
    <property type="match status" value="1"/>
</dbReference>
<dbReference type="PANTHER" id="PTHR11142:SF0">
    <property type="entry name" value="TRNA PSEUDOURIDINE SYNTHASE-LIKE 1"/>
    <property type="match status" value="1"/>
</dbReference>
<dbReference type="Pfam" id="PF01416">
    <property type="entry name" value="PseudoU_synth_1"/>
    <property type="match status" value="2"/>
</dbReference>
<dbReference type="PIRSF" id="PIRSF001430">
    <property type="entry name" value="tRNA_psdUrid_synth"/>
    <property type="match status" value="1"/>
</dbReference>
<dbReference type="SUPFAM" id="SSF55120">
    <property type="entry name" value="Pseudouridine synthase"/>
    <property type="match status" value="1"/>
</dbReference>
<protein>
    <recommendedName>
        <fullName evidence="1">tRNA pseudouridine synthase A</fullName>
        <ecNumber evidence="1">5.4.99.12</ecNumber>
    </recommendedName>
    <alternativeName>
        <fullName evidence="1">tRNA pseudouridine(38-40) synthase</fullName>
    </alternativeName>
    <alternativeName>
        <fullName evidence="1">tRNA pseudouridylate synthase I</fullName>
    </alternativeName>
    <alternativeName>
        <fullName evidence="1">tRNA-uridine isomerase I</fullName>
    </alternativeName>
</protein>
<accession>B6J6W3</accession>
<proteinExistence type="inferred from homology"/>
<sequence length="261" mass="29434">MARIALGIRYDGSAYHGWQVQEALKTVQGEVEKALSAVANHPVFVTCAGRTDAGVHASAQVAHFDTTAYRSDHAWVFGANSNLPHDISILWAKAVEEDFHARYSAMARRYRYIVYNHEIRPAILRKAIGWHYRPLDEKRMQAGAQYLIGEHDFSSFQGAGCQSRTPVRKIFQIEIYRIRRMVVIEVQANAFLLHMVRNIAGVLIAIGSGEKHPDWAQTVLKAKDRRQGGVTVPPNGLYLVEVNYPPNFKLPRMPLGPFFLP</sequence>
<name>TRUA_COXB1</name>